<reference key="1">
    <citation type="journal article" date="2004" name="Proc. Natl. Acad. Sci. U.S.A.">
        <title>Structural flexibility in the Burkholderia mallei genome.</title>
        <authorList>
            <person name="Nierman W.C."/>
            <person name="DeShazer D."/>
            <person name="Kim H.S."/>
            <person name="Tettelin H."/>
            <person name="Nelson K.E."/>
            <person name="Feldblyum T.V."/>
            <person name="Ulrich R.L."/>
            <person name="Ronning C.M."/>
            <person name="Brinkac L.M."/>
            <person name="Daugherty S.C."/>
            <person name="Davidsen T.D."/>
            <person name="DeBoy R.T."/>
            <person name="Dimitrov G."/>
            <person name="Dodson R.J."/>
            <person name="Durkin A.S."/>
            <person name="Gwinn M.L."/>
            <person name="Haft D.H."/>
            <person name="Khouri H.M."/>
            <person name="Kolonay J.F."/>
            <person name="Madupu R."/>
            <person name="Mohammoud Y."/>
            <person name="Nelson W.C."/>
            <person name="Radune D."/>
            <person name="Romero C.M."/>
            <person name="Sarria S."/>
            <person name="Selengut J."/>
            <person name="Shamblin C."/>
            <person name="Sullivan S.A."/>
            <person name="White O."/>
            <person name="Yu Y."/>
            <person name="Zafar N."/>
            <person name="Zhou L."/>
            <person name="Fraser C.M."/>
        </authorList>
    </citation>
    <scope>NUCLEOTIDE SEQUENCE [LARGE SCALE GENOMIC DNA]</scope>
    <source>
        <strain>ATCC 23344</strain>
    </source>
</reference>
<sequence>MARPTGKKFDKRRQQQNPLFKRKKFCRFTAAGVEQIDYKDTETLKDFIGENGKITPARLTGTKAHYQRQLDTAIKRARFLALLPYTDQHKA</sequence>
<keyword id="KW-1185">Reference proteome</keyword>
<keyword id="KW-0687">Ribonucleoprotein</keyword>
<keyword id="KW-0689">Ribosomal protein</keyword>
<keyword id="KW-0694">RNA-binding</keyword>
<keyword id="KW-0699">rRNA-binding</keyword>
<evidence type="ECO:0000255" key="1">
    <source>
        <dbReference type="HAMAP-Rule" id="MF_00270"/>
    </source>
</evidence>
<evidence type="ECO:0000305" key="2"/>
<protein>
    <recommendedName>
        <fullName evidence="1">Small ribosomal subunit protein bS18</fullName>
    </recommendedName>
    <alternativeName>
        <fullName evidence="2">30S ribosomal protein S18</fullName>
    </alternativeName>
</protein>
<feature type="chain" id="PRO_0000111133" description="Small ribosomal subunit protein bS18">
    <location>
        <begin position="1"/>
        <end position="91"/>
    </location>
</feature>
<name>RS18_BURMA</name>
<comment type="function">
    <text evidence="1">Binds as a heterodimer with protein bS6 to the central domain of the 16S rRNA, where it helps stabilize the platform of the 30S subunit.</text>
</comment>
<comment type="subunit">
    <text evidence="1">Part of the 30S ribosomal subunit. Forms a tight heterodimer with protein bS6.</text>
</comment>
<comment type="similarity">
    <text evidence="1">Belongs to the bacterial ribosomal protein bS18 family.</text>
</comment>
<accession>Q62JR1</accession>
<proteinExistence type="inferred from homology"/>
<organism>
    <name type="scientific">Burkholderia mallei (strain ATCC 23344)</name>
    <dbReference type="NCBI Taxonomy" id="243160"/>
    <lineage>
        <taxon>Bacteria</taxon>
        <taxon>Pseudomonadati</taxon>
        <taxon>Pseudomonadota</taxon>
        <taxon>Betaproteobacteria</taxon>
        <taxon>Burkholderiales</taxon>
        <taxon>Burkholderiaceae</taxon>
        <taxon>Burkholderia</taxon>
        <taxon>pseudomallei group</taxon>
    </lineage>
</organism>
<dbReference type="EMBL" id="CP000010">
    <property type="protein sequence ID" value="AAU47595.1"/>
    <property type="molecule type" value="Genomic_DNA"/>
</dbReference>
<dbReference type="RefSeq" id="WP_004193360.1">
    <property type="nucleotide sequence ID" value="NC_006348.1"/>
</dbReference>
<dbReference type="RefSeq" id="YP_103058.1">
    <property type="nucleotide sequence ID" value="NC_006348.1"/>
</dbReference>
<dbReference type="SMR" id="Q62JR1"/>
<dbReference type="GeneID" id="93173028"/>
<dbReference type="KEGG" id="bma:BMA1402"/>
<dbReference type="PATRIC" id="fig|243160.12.peg.1443"/>
<dbReference type="eggNOG" id="COG0238">
    <property type="taxonomic scope" value="Bacteria"/>
</dbReference>
<dbReference type="HOGENOM" id="CLU_148710_0_3_4"/>
<dbReference type="PRO" id="PR:Q62JR1"/>
<dbReference type="Proteomes" id="UP000006693">
    <property type="component" value="Chromosome 1"/>
</dbReference>
<dbReference type="GO" id="GO:0022627">
    <property type="term" value="C:cytosolic small ribosomal subunit"/>
    <property type="evidence" value="ECO:0007669"/>
    <property type="project" value="TreeGrafter"/>
</dbReference>
<dbReference type="GO" id="GO:0070181">
    <property type="term" value="F:small ribosomal subunit rRNA binding"/>
    <property type="evidence" value="ECO:0007669"/>
    <property type="project" value="TreeGrafter"/>
</dbReference>
<dbReference type="GO" id="GO:0003735">
    <property type="term" value="F:structural constituent of ribosome"/>
    <property type="evidence" value="ECO:0007669"/>
    <property type="project" value="InterPro"/>
</dbReference>
<dbReference type="GO" id="GO:0006412">
    <property type="term" value="P:translation"/>
    <property type="evidence" value="ECO:0007669"/>
    <property type="project" value="UniProtKB-UniRule"/>
</dbReference>
<dbReference type="Gene3D" id="4.10.640.10">
    <property type="entry name" value="Ribosomal protein S18"/>
    <property type="match status" value="1"/>
</dbReference>
<dbReference type="HAMAP" id="MF_00270">
    <property type="entry name" value="Ribosomal_bS18"/>
    <property type="match status" value="1"/>
</dbReference>
<dbReference type="InterPro" id="IPR001648">
    <property type="entry name" value="Ribosomal_bS18"/>
</dbReference>
<dbReference type="InterPro" id="IPR018275">
    <property type="entry name" value="Ribosomal_bS18_CS"/>
</dbReference>
<dbReference type="InterPro" id="IPR036870">
    <property type="entry name" value="Ribosomal_bS18_sf"/>
</dbReference>
<dbReference type="NCBIfam" id="TIGR00165">
    <property type="entry name" value="S18"/>
    <property type="match status" value="1"/>
</dbReference>
<dbReference type="PANTHER" id="PTHR13479">
    <property type="entry name" value="30S RIBOSOMAL PROTEIN S18"/>
    <property type="match status" value="1"/>
</dbReference>
<dbReference type="PANTHER" id="PTHR13479:SF40">
    <property type="entry name" value="SMALL RIBOSOMAL SUBUNIT PROTEIN BS18M"/>
    <property type="match status" value="1"/>
</dbReference>
<dbReference type="Pfam" id="PF01084">
    <property type="entry name" value="Ribosomal_S18"/>
    <property type="match status" value="1"/>
</dbReference>
<dbReference type="PRINTS" id="PR00974">
    <property type="entry name" value="RIBOSOMALS18"/>
</dbReference>
<dbReference type="SUPFAM" id="SSF46911">
    <property type="entry name" value="Ribosomal protein S18"/>
    <property type="match status" value="1"/>
</dbReference>
<dbReference type="PROSITE" id="PS00057">
    <property type="entry name" value="RIBOSOMAL_S18"/>
    <property type="match status" value="1"/>
</dbReference>
<gene>
    <name evidence="1" type="primary">rpsR</name>
    <name type="ordered locus">BMA1402</name>
</gene>